<evidence type="ECO:0000250" key="1"/>
<evidence type="ECO:0000256" key="2">
    <source>
        <dbReference type="SAM" id="MobiDB-lite"/>
    </source>
</evidence>
<evidence type="ECO:0000305" key="3"/>
<dbReference type="EMBL" id="AJ293897">
    <property type="protein sequence ID" value="CAC34588.1"/>
    <property type="molecule type" value="mRNA"/>
</dbReference>
<dbReference type="EMBL" id="AK013222">
    <property type="protein sequence ID" value="BAB28723.1"/>
    <property type="molecule type" value="mRNA"/>
</dbReference>
<dbReference type="EMBL" id="BC047068">
    <property type="protein sequence ID" value="AAH47068.1"/>
    <property type="molecule type" value="mRNA"/>
</dbReference>
<dbReference type="CCDS" id="CCDS18068.1"/>
<dbReference type="RefSeq" id="NP_081554.2">
    <property type="nucleotide sequence ID" value="NM_027278.3"/>
</dbReference>
<dbReference type="SMR" id="Q99JH1"/>
<dbReference type="FunCoup" id="Q99JH1">
    <property type="interactions" value="129"/>
</dbReference>
<dbReference type="STRING" id="10090.ENSMUSP00000041477"/>
<dbReference type="GlyGen" id="Q99JH1">
    <property type="glycosylation" value="1 site, 1 O-linked glycan (1 site)"/>
</dbReference>
<dbReference type="iPTMnet" id="Q99JH1"/>
<dbReference type="PhosphoSitePlus" id="Q99JH1"/>
<dbReference type="PaxDb" id="10090-ENSMUSP00000041477"/>
<dbReference type="PeptideAtlas" id="Q99JH1"/>
<dbReference type="ProteomicsDB" id="260918"/>
<dbReference type="Pumba" id="Q99JH1"/>
<dbReference type="Antibodypedia" id="55898">
    <property type="antibodies" value="78 antibodies from 15 providers"/>
</dbReference>
<dbReference type="Ensembl" id="ENSMUST00000038434.4">
    <property type="protein sequence ID" value="ENSMUSP00000041477.4"/>
    <property type="gene ID" value="ENSMUSG00000036114.4"/>
</dbReference>
<dbReference type="GeneID" id="69961"/>
<dbReference type="KEGG" id="mmu:69961"/>
<dbReference type="UCSC" id="uc008sjh.2">
    <property type="organism name" value="mouse"/>
</dbReference>
<dbReference type="AGR" id="MGI:1917211"/>
<dbReference type="CTD" id="138716"/>
<dbReference type="MGI" id="MGI:1917211">
    <property type="gene designation" value="Rpp25l"/>
</dbReference>
<dbReference type="VEuPathDB" id="HostDB:ENSMUSG00000036114"/>
<dbReference type="eggNOG" id="KOG2567">
    <property type="taxonomic scope" value="Eukaryota"/>
</dbReference>
<dbReference type="GeneTree" id="ENSGT00390000002564"/>
<dbReference type="HOGENOM" id="CLU_096311_0_0_1"/>
<dbReference type="InParanoid" id="Q99JH1"/>
<dbReference type="OMA" id="RNLPVIW"/>
<dbReference type="OrthoDB" id="424402at2759"/>
<dbReference type="PhylomeDB" id="Q99JH1"/>
<dbReference type="TreeFam" id="TF325688"/>
<dbReference type="BioGRID-ORCS" id="69961">
    <property type="hits" value="22 hits in 76 CRISPR screens"/>
</dbReference>
<dbReference type="ChiTaRS" id="Rpp25l">
    <property type="organism name" value="mouse"/>
</dbReference>
<dbReference type="PRO" id="PR:Q99JH1"/>
<dbReference type="Proteomes" id="UP000000589">
    <property type="component" value="Chromosome 4"/>
</dbReference>
<dbReference type="RNAct" id="Q99JH1">
    <property type="molecule type" value="protein"/>
</dbReference>
<dbReference type="Bgee" id="ENSMUSG00000036114">
    <property type="expression patterns" value="Expressed in hindlimb stylopod muscle and 255 other cell types or tissues"/>
</dbReference>
<dbReference type="GO" id="GO:0005634">
    <property type="term" value="C:nucleus"/>
    <property type="evidence" value="ECO:0007669"/>
    <property type="project" value="UniProtKB-SubCell"/>
</dbReference>
<dbReference type="GO" id="GO:0003676">
    <property type="term" value="F:nucleic acid binding"/>
    <property type="evidence" value="ECO:0007669"/>
    <property type="project" value="InterPro"/>
</dbReference>
<dbReference type="FunFam" id="3.30.110.20:FF:000004">
    <property type="entry name" value="Ribonuclease P protein subunit p25-like protein"/>
    <property type="match status" value="1"/>
</dbReference>
<dbReference type="Gene3D" id="3.30.110.20">
    <property type="entry name" value="Alba-like domain"/>
    <property type="match status" value="1"/>
</dbReference>
<dbReference type="InterPro" id="IPR036882">
    <property type="entry name" value="Alba-like_dom_sf"/>
</dbReference>
<dbReference type="InterPro" id="IPR051958">
    <property type="entry name" value="Alba-like_NAB"/>
</dbReference>
<dbReference type="InterPro" id="IPR002775">
    <property type="entry name" value="DNA/RNA-bd_Alba-like"/>
</dbReference>
<dbReference type="PANTHER" id="PTHR13516:SF8">
    <property type="entry name" value="RIBONUCLEASE P PROTEIN SUBUNIT P25-LIKE PROTEIN"/>
    <property type="match status" value="1"/>
</dbReference>
<dbReference type="PANTHER" id="PTHR13516">
    <property type="entry name" value="RIBONUCLEASE P SUBUNIT P25"/>
    <property type="match status" value="1"/>
</dbReference>
<dbReference type="Pfam" id="PF01918">
    <property type="entry name" value="Alba"/>
    <property type="match status" value="1"/>
</dbReference>
<dbReference type="SUPFAM" id="SSF82704">
    <property type="entry name" value="AlbA-like"/>
    <property type="match status" value="1"/>
</dbReference>
<accession>Q99JH1</accession>
<accession>Q9CYX4</accession>
<keyword id="KW-0539">Nucleus</keyword>
<keyword id="KW-1185">Reference proteome</keyword>
<protein>
    <recommendedName>
        <fullName>Ribonuclease P protein subunit p25-like protein</fullName>
        <shortName>RNase P protein subunit-like p25</shortName>
    </recommendedName>
    <alternativeName>
        <fullName>Rpp25-like protein</fullName>
    </alternativeName>
</protein>
<comment type="function">
    <text evidence="1">May be a component of ribonuclease P or MRP.</text>
</comment>
<comment type="subcellular location">
    <subcellularLocation>
        <location evidence="1">Nucleus</location>
    </subcellularLocation>
</comment>
<comment type="similarity">
    <text evidence="3">Belongs to the histone-like Alba family.</text>
</comment>
<organism>
    <name type="scientific">Mus musculus</name>
    <name type="common">Mouse</name>
    <dbReference type="NCBI Taxonomy" id="10090"/>
    <lineage>
        <taxon>Eukaryota</taxon>
        <taxon>Metazoa</taxon>
        <taxon>Chordata</taxon>
        <taxon>Craniata</taxon>
        <taxon>Vertebrata</taxon>
        <taxon>Euteleostomi</taxon>
        <taxon>Mammalia</taxon>
        <taxon>Eutheria</taxon>
        <taxon>Euarchontoglires</taxon>
        <taxon>Glires</taxon>
        <taxon>Rodentia</taxon>
        <taxon>Myomorpha</taxon>
        <taxon>Muroidea</taxon>
        <taxon>Muridae</taxon>
        <taxon>Murinae</taxon>
        <taxon>Mus</taxon>
        <taxon>Mus</taxon>
    </lineage>
</organism>
<feature type="chain" id="PRO_0000271033" description="Ribonuclease P protein subunit p25-like protein">
    <location>
        <begin position="1"/>
        <end position="163"/>
    </location>
</feature>
<feature type="region of interest" description="Disordered" evidence="2">
    <location>
        <begin position="1"/>
        <end position="24"/>
    </location>
</feature>
<feature type="region of interest" description="Disordered" evidence="2">
    <location>
        <begin position="126"/>
        <end position="163"/>
    </location>
</feature>
<feature type="compositionally biased region" description="Basic residues" evidence="2">
    <location>
        <begin position="153"/>
        <end position="163"/>
    </location>
</feature>
<feature type="sequence conflict" description="In Ref. 2; BAB28723." evidence="3" ref="2">
    <original>R</original>
    <variation>E</variation>
    <location>
        <position position="6"/>
    </location>
</feature>
<proteinExistence type="evidence at protein level"/>
<name>RP25L_MOUSE</name>
<sequence>MEQYRRAGSVELPASSPMPQLPPDTLEMRVRDGSKIRNLLGLALGRLEGGSTRHVVFSGSGRAAGKAVSCAEIVKRRVPGLHQLTKLRFLQTEDSWVPTSPDTGLDPLTVRRHVPAVWVLLSRDPLDPSECGYQPPGAPPGLGSIPSPSCGPRPRRRARDTRS</sequence>
<reference key="1">
    <citation type="submission" date="2000-09" db="EMBL/GenBank/DDBJ databases">
        <title>Full length sequencing of some human and murine muscular transcript (Telethon Italy project B41).</title>
        <authorList>
            <person name="Ievolella C."/>
            <person name="Zara I."/>
            <person name="Lanfranchi G."/>
        </authorList>
    </citation>
    <scope>NUCLEOTIDE SEQUENCE [LARGE SCALE MRNA]</scope>
    <source>
        <tissue>Skeletal muscle</tissue>
    </source>
</reference>
<reference key="2">
    <citation type="journal article" date="2005" name="Science">
        <title>The transcriptional landscape of the mammalian genome.</title>
        <authorList>
            <person name="Carninci P."/>
            <person name="Kasukawa T."/>
            <person name="Katayama S."/>
            <person name="Gough J."/>
            <person name="Frith M.C."/>
            <person name="Maeda N."/>
            <person name="Oyama R."/>
            <person name="Ravasi T."/>
            <person name="Lenhard B."/>
            <person name="Wells C."/>
            <person name="Kodzius R."/>
            <person name="Shimokawa K."/>
            <person name="Bajic V.B."/>
            <person name="Brenner S.E."/>
            <person name="Batalov S."/>
            <person name="Forrest A.R."/>
            <person name="Zavolan M."/>
            <person name="Davis M.J."/>
            <person name="Wilming L.G."/>
            <person name="Aidinis V."/>
            <person name="Allen J.E."/>
            <person name="Ambesi-Impiombato A."/>
            <person name="Apweiler R."/>
            <person name="Aturaliya R.N."/>
            <person name="Bailey T.L."/>
            <person name="Bansal M."/>
            <person name="Baxter L."/>
            <person name="Beisel K.W."/>
            <person name="Bersano T."/>
            <person name="Bono H."/>
            <person name="Chalk A.M."/>
            <person name="Chiu K.P."/>
            <person name="Choudhary V."/>
            <person name="Christoffels A."/>
            <person name="Clutterbuck D.R."/>
            <person name="Crowe M.L."/>
            <person name="Dalla E."/>
            <person name="Dalrymple B.P."/>
            <person name="de Bono B."/>
            <person name="Della Gatta G."/>
            <person name="di Bernardo D."/>
            <person name="Down T."/>
            <person name="Engstrom P."/>
            <person name="Fagiolini M."/>
            <person name="Faulkner G."/>
            <person name="Fletcher C.F."/>
            <person name="Fukushima T."/>
            <person name="Furuno M."/>
            <person name="Futaki S."/>
            <person name="Gariboldi M."/>
            <person name="Georgii-Hemming P."/>
            <person name="Gingeras T.R."/>
            <person name="Gojobori T."/>
            <person name="Green R.E."/>
            <person name="Gustincich S."/>
            <person name="Harbers M."/>
            <person name="Hayashi Y."/>
            <person name="Hensch T.K."/>
            <person name="Hirokawa N."/>
            <person name="Hill D."/>
            <person name="Huminiecki L."/>
            <person name="Iacono M."/>
            <person name="Ikeo K."/>
            <person name="Iwama A."/>
            <person name="Ishikawa T."/>
            <person name="Jakt M."/>
            <person name="Kanapin A."/>
            <person name="Katoh M."/>
            <person name="Kawasawa Y."/>
            <person name="Kelso J."/>
            <person name="Kitamura H."/>
            <person name="Kitano H."/>
            <person name="Kollias G."/>
            <person name="Krishnan S.P."/>
            <person name="Kruger A."/>
            <person name="Kummerfeld S.K."/>
            <person name="Kurochkin I.V."/>
            <person name="Lareau L.F."/>
            <person name="Lazarevic D."/>
            <person name="Lipovich L."/>
            <person name="Liu J."/>
            <person name="Liuni S."/>
            <person name="McWilliam S."/>
            <person name="Madan Babu M."/>
            <person name="Madera M."/>
            <person name="Marchionni L."/>
            <person name="Matsuda H."/>
            <person name="Matsuzawa S."/>
            <person name="Miki H."/>
            <person name="Mignone F."/>
            <person name="Miyake S."/>
            <person name="Morris K."/>
            <person name="Mottagui-Tabar S."/>
            <person name="Mulder N."/>
            <person name="Nakano N."/>
            <person name="Nakauchi H."/>
            <person name="Ng P."/>
            <person name="Nilsson R."/>
            <person name="Nishiguchi S."/>
            <person name="Nishikawa S."/>
            <person name="Nori F."/>
            <person name="Ohara O."/>
            <person name="Okazaki Y."/>
            <person name="Orlando V."/>
            <person name="Pang K.C."/>
            <person name="Pavan W.J."/>
            <person name="Pavesi G."/>
            <person name="Pesole G."/>
            <person name="Petrovsky N."/>
            <person name="Piazza S."/>
            <person name="Reed J."/>
            <person name="Reid J.F."/>
            <person name="Ring B.Z."/>
            <person name="Ringwald M."/>
            <person name="Rost B."/>
            <person name="Ruan Y."/>
            <person name="Salzberg S.L."/>
            <person name="Sandelin A."/>
            <person name="Schneider C."/>
            <person name="Schoenbach C."/>
            <person name="Sekiguchi K."/>
            <person name="Semple C.A."/>
            <person name="Seno S."/>
            <person name="Sessa L."/>
            <person name="Sheng Y."/>
            <person name="Shibata Y."/>
            <person name="Shimada H."/>
            <person name="Shimada K."/>
            <person name="Silva D."/>
            <person name="Sinclair B."/>
            <person name="Sperling S."/>
            <person name="Stupka E."/>
            <person name="Sugiura K."/>
            <person name="Sultana R."/>
            <person name="Takenaka Y."/>
            <person name="Taki K."/>
            <person name="Tammoja K."/>
            <person name="Tan S.L."/>
            <person name="Tang S."/>
            <person name="Taylor M.S."/>
            <person name="Tegner J."/>
            <person name="Teichmann S.A."/>
            <person name="Ueda H.R."/>
            <person name="van Nimwegen E."/>
            <person name="Verardo R."/>
            <person name="Wei C.L."/>
            <person name="Yagi K."/>
            <person name="Yamanishi H."/>
            <person name="Zabarovsky E."/>
            <person name="Zhu S."/>
            <person name="Zimmer A."/>
            <person name="Hide W."/>
            <person name="Bult C."/>
            <person name="Grimmond S.M."/>
            <person name="Teasdale R.D."/>
            <person name="Liu E.T."/>
            <person name="Brusic V."/>
            <person name="Quackenbush J."/>
            <person name="Wahlestedt C."/>
            <person name="Mattick J.S."/>
            <person name="Hume D.A."/>
            <person name="Kai C."/>
            <person name="Sasaki D."/>
            <person name="Tomaru Y."/>
            <person name="Fukuda S."/>
            <person name="Kanamori-Katayama M."/>
            <person name="Suzuki M."/>
            <person name="Aoki J."/>
            <person name="Arakawa T."/>
            <person name="Iida J."/>
            <person name="Imamura K."/>
            <person name="Itoh M."/>
            <person name="Kato T."/>
            <person name="Kawaji H."/>
            <person name="Kawagashira N."/>
            <person name="Kawashima T."/>
            <person name="Kojima M."/>
            <person name="Kondo S."/>
            <person name="Konno H."/>
            <person name="Nakano K."/>
            <person name="Ninomiya N."/>
            <person name="Nishio T."/>
            <person name="Okada M."/>
            <person name="Plessy C."/>
            <person name="Shibata K."/>
            <person name="Shiraki T."/>
            <person name="Suzuki S."/>
            <person name="Tagami M."/>
            <person name="Waki K."/>
            <person name="Watahiki A."/>
            <person name="Okamura-Oho Y."/>
            <person name="Suzuki H."/>
            <person name="Kawai J."/>
            <person name="Hayashizaki Y."/>
        </authorList>
    </citation>
    <scope>NUCLEOTIDE SEQUENCE [LARGE SCALE MRNA]</scope>
    <source>
        <strain>C57BL/6J</strain>
        <tissue>Embryo</tissue>
    </source>
</reference>
<reference key="3">
    <citation type="journal article" date="2004" name="Genome Res.">
        <title>The status, quality, and expansion of the NIH full-length cDNA project: the Mammalian Gene Collection (MGC).</title>
        <authorList>
            <consortium name="The MGC Project Team"/>
        </authorList>
    </citation>
    <scope>NUCLEOTIDE SEQUENCE [LARGE SCALE MRNA]</scope>
    <source>
        <strain>FVB/N-3</strain>
        <tissue>Mammary tumor</tissue>
    </source>
</reference>
<reference key="4">
    <citation type="journal article" date="2010" name="Cell">
        <title>A tissue-specific atlas of mouse protein phosphorylation and expression.</title>
        <authorList>
            <person name="Huttlin E.L."/>
            <person name="Jedrychowski M.P."/>
            <person name="Elias J.E."/>
            <person name="Goswami T."/>
            <person name="Rad R."/>
            <person name="Beausoleil S.A."/>
            <person name="Villen J."/>
            <person name="Haas W."/>
            <person name="Sowa M.E."/>
            <person name="Gygi S.P."/>
        </authorList>
    </citation>
    <scope>IDENTIFICATION BY MASS SPECTROMETRY [LARGE SCALE ANALYSIS]</scope>
    <source>
        <tissue>Liver</tissue>
        <tissue>Pancreas</tissue>
    </source>
</reference>
<gene>
    <name type="primary">Rpp25l</name>
</gene>